<reference key="1">
    <citation type="journal article" date="2007" name="Science">
        <title>The Fusarium graminearum genome reveals a link between localized polymorphism and pathogen specialization.</title>
        <authorList>
            <person name="Cuomo C.A."/>
            <person name="Gueldener U."/>
            <person name="Xu J.-R."/>
            <person name="Trail F."/>
            <person name="Turgeon B.G."/>
            <person name="Di Pietro A."/>
            <person name="Walton J.D."/>
            <person name="Ma L.-J."/>
            <person name="Baker S.E."/>
            <person name="Rep M."/>
            <person name="Adam G."/>
            <person name="Antoniw J."/>
            <person name="Baldwin T."/>
            <person name="Calvo S.E."/>
            <person name="Chang Y.-L."/>
            <person name="DeCaprio D."/>
            <person name="Gale L.R."/>
            <person name="Gnerre S."/>
            <person name="Goswami R.S."/>
            <person name="Hammond-Kosack K."/>
            <person name="Harris L.J."/>
            <person name="Hilburn K."/>
            <person name="Kennell J.C."/>
            <person name="Kroken S."/>
            <person name="Magnuson J.K."/>
            <person name="Mannhaupt G."/>
            <person name="Mauceli E.W."/>
            <person name="Mewes H.-W."/>
            <person name="Mitterbauer R."/>
            <person name="Muehlbauer G."/>
            <person name="Muensterkoetter M."/>
            <person name="Nelson D."/>
            <person name="O'Donnell K."/>
            <person name="Ouellet T."/>
            <person name="Qi W."/>
            <person name="Quesneville H."/>
            <person name="Roncero M.I.G."/>
            <person name="Seong K.-Y."/>
            <person name="Tetko I.V."/>
            <person name="Urban M."/>
            <person name="Waalwijk C."/>
            <person name="Ward T.J."/>
            <person name="Yao J."/>
            <person name="Birren B.W."/>
            <person name="Kistler H.C."/>
        </authorList>
    </citation>
    <scope>NUCLEOTIDE SEQUENCE [LARGE SCALE GENOMIC DNA]</scope>
    <source>
        <strain>ATCC MYA-4620 / CBS 123657 / FGSC 9075 / NRRL 31084 / PH-1</strain>
    </source>
</reference>
<reference key="2">
    <citation type="journal article" date="2010" name="Nature">
        <title>Comparative genomics reveals mobile pathogenicity chromosomes in Fusarium.</title>
        <authorList>
            <person name="Ma L.-J."/>
            <person name="van der Does H.C."/>
            <person name="Borkovich K.A."/>
            <person name="Coleman J.J."/>
            <person name="Daboussi M.-J."/>
            <person name="Di Pietro A."/>
            <person name="Dufresne M."/>
            <person name="Freitag M."/>
            <person name="Grabherr M."/>
            <person name="Henrissat B."/>
            <person name="Houterman P.M."/>
            <person name="Kang S."/>
            <person name="Shim W.-B."/>
            <person name="Woloshuk C."/>
            <person name="Xie X."/>
            <person name="Xu J.-R."/>
            <person name="Antoniw J."/>
            <person name="Baker S.E."/>
            <person name="Bluhm B.H."/>
            <person name="Breakspear A."/>
            <person name="Brown D.W."/>
            <person name="Butchko R.A.E."/>
            <person name="Chapman S."/>
            <person name="Coulson R."/>
            <person name="Coutinho P.M."/>
            <person name="Danchin E.G.J."/>
            <person name="Diener A."/>
            <person name="Gale L.R."/>
            <person name="Gardiner D.M."/>
            <person name="Goff S."/>
            <person name="Hammond-Kosack K.E."/>
            <person name="Hilburn K."/>
            <person name="Hua-Van A."/>
            <person name="Jonkers W."/>
            <person name="Kazan K."/>
            <person name="Kodira C.D."/>
            <person name="Koehrsen M."/>
            <person name="Kumar L."/>
            <person name="Lee Y.-H."/>
            <person name="Li L."/>
            <person name="Manners J.M."/>
            <person name="Miranda-Saavedra D."/>
            <person name="Mukherjee M."/>
            <person name="Park G."/>
            <person name="Park J."/>
            <person name="Park S.-Y."/>
            <person name="Proctor R.H."/>
            <person name="Regev A."/>
            <person name="Ruiz-Roldan M.C."/>
            <person name="Sain D."/>
            <person name="Sakthikumar S."/>
            <person name="Sykes S."/>
            <person name="Schwartz D.C."/>
            <person name="Turgeon B.G."/>
            <person name="Wapinski I."/>
            <person name="Yoder O."/>
            <person name="Young S."/>
            <person name="Zeng Q."/>
            <person name="Zhou S."/>
            <person name="Galagan J."/>
            <person name="Cuomo C.A."/>
            <person name="Kistler H.C."/>
            <person name="Rep M."/>
        </authorList>
    </citation>
    <scope>GENOME REANNOTATION</scope>
    <source>
        <strain>ATCC MYA-4620 / CBS 123657 / FGSC 9075 / NRRL 31084 / PH-1</strain>
    </source>
</reference>
<reference key="3">
    <citation type="journal article" date="2015" name="BMC Genomics">
        <title>The completed genome sequence of the pathogenic ascomycete fungus Fusarium graminearum.</title>
        <authorList>
            <person name="King R."/>
            <person name="Urban M."/>
            <person name="Hammond-Kosack M.C.U."/>
            <person name="Hassani-Pak K."/>
            <person name="Hammond-Kosack K.E."/>
        </authorList>
    </citation>
    <scope>NUCLEOTIDE SEQUENCE [LARGE SCALE GENOMIC DNA]</scope>
    <source>
        <strain>ATCC MYA-4620 / CBS 123657 / FGSC 9075 / NRRL 31084 / PH-1</strain>
    </source>
</reference>
<reference key="4">
    <citation type="journal article" date="2018" name="J. Am. Chem. Soc.">
        <title>Gramillin A and B: cyclic lipopeptides identified as the nonribosomal biosynthetic products of Fusarium graminearum.</title>
        <authorList>
            <person name="Bahadoor A."/>
            <person name="Brauer E.K."/>
            <person name="Bosnich W."/>
            <person name="Schneiderman D."/>
            <person name="Johnston A."/>
            <person name="Aubin Y."/>
            <person name="Blackwell B."/>
            <person name="Melanson J.E."/>
            <person name="Harris L.J."/>
        </authorList>
    </citation>
    <scope>FUNCTION</scope>
    <scope>PATHWAY</scope>
</reference>
<feature type="chain" id="PRO_0000450567" description="Aminotransferase FGSG_00049">
    <location>
        <begin position="1"/>
        <end position="382"/>
    </location>
</feature>
<feature type="binding site" evidence="1">
    <location>
        <position position="80"/>
    </location>
    <ligand>
        <name>pyridoxal 5'-phosphate</name>
        <dbReference type="ChEBI" id="CHEBI:597326"/>
    </ligand>
</feature>
<feature type="binding site" evidence="1">
    <location>
        <position position="217"/>
    </location>
    <ligand>
        <name>pyridoxal 5'-phosphate</name>
        <dbReference type="ChEBI" id="CHEBI:597326"/>
    </ligand>
</feature>
<feature type="modified residue" description="N6-(pyridoxal phosphate)lysine" evidence="1">
    <location>
        <position position="181"/>
    </location>
</feature>
<organism>
    <name type="scientific">Gibberella zeae (strain ATCC MYA-4620 / CBS 123657 / FGSC 9075 / NRRL 31084 / PH-1)</name>
    <name type="common">Wheat head blight fungus</name>
    <name type="synonym">Fusarium graminearum</name>
    <dbReference type="NCBI Taxonomy" id="229533"/>
    <lineage>
        <taxon>Eukaryota</taxon>
        <taxon>Fungi</taxon>
        <taxon>Dikarya</taxon>
        <taxon>Ascomycota</taxon>
        <taxon>Pezizomycotina</taxon>
        <taxon>Sordariomycetes</taxon>
        <taxon>Hypocreomycetidae</taxon>
        <taxon>Hypocreales</taxon>
        <taxon>Nectriaceae</taxon>
        <taxon>Fusarium</taxon>
    </lineage>
</organism>
<accession>I1R9B6</accession>
<accession>A0A098CZ47</accession>
<comment type="function">
    <text evidence="2 5">Aminotransferase; part of the gene cluster that mediates the biosynthesis of gramillins A and B, bicyclic lipopeptides that induce cell death in maize leaves but not in wheat leaves (PubMed:30395461). The nonribosomal peptide synthetase GRA1 incorporates respectively a glutamic adic (Glu), a leucine (Leu), a serine (Ser), a hydroxyglutamine (HOGln), a 2-amino decanoic acid, and 2 cysteins (CysB and CysA) (Probable). The biosynthesis of 2-amino decanoic acid incorporated in gramillins could be initiated by a fatty acid synthase composed of the alpha and beta subunits FGSG_00036 and FGSG_11656 (Probable). The cytochrome P450 monooxygenase FGSG_15680 could hydroxylate the fatty acid chain (Probable). Subsequent oxidation to the ketone by the oxidoreductase FGSG_00048 and transamination by aminotransferase FGSG_00049 could form 2-amino-decanoic acid (Probable). On the other hand, FGSG_15680 could also be responsible for the HO-modified glutamine at the gamma-position (Probable). Whether hydroxylation occurs on the fully assembled product or on the Gln residue prior to assembly into the gramillins requires further proof (Probable). The thioredoxin FGSG_00043 could also be required for the disulfide-bond formation between CysA and CysB (Probable). The specific involvement of the remaining proteins from the cluster is more difficult to discern, but could have broader regulatory (FGSG_00040 and FGSG_11657) or enzymatic functions (FGSG_00044 and FGSG_00045) (Probable). The final C-domain of GRA1 does not possess the expected sequence of a termination CT domain, often implicated in macrocyclization and release of a cyclopeptidein fungal NRPs; and the thioesterase FGSG_00047 may act in concert with the terminal C-domain of GRA1 to catalyze the formation of the macrocyclic anhydride and release of the products (Probable).</text>
</comment>
<comment type="cofactor">
    <cofactor evidence="1">
        <name>pyridoxal 5'-phosphate</name>
        <dbReference type="ChEBI" id="CHEBI:597326"/>
    </cofactor>
</comment>
<comment type="pathway">
    <text evidence="5">Mycotoxin biosynthesis.</text>
</comment>
<comment type="similarity">
    <text evidence="4">Belongs to the class-IV pyridoxal-phosphate-dependent aminotransferase family.</text>
</comment>
<evidence type="ECO:0000250" key="1">
    <source>
        <dbReference type="UniProtKB" id="P19938"/>
    </source>
</evidence>
<evidence type="ECO:0000269" key="2">
    <source>
    </source>
</evidence>
<evidence type="ECO:0000303" key="3">
    <source>
    </source>
</evidence>
<evidence type="ECO:0000305" key="4"/>
<evidence type="ECO:0000305" key="5">
    <source>
    </source>
</evidence>
<gene>
    <name type="ORF">FGRAMPH1_01T00157</name>
    <name type="ORF">FGSG_00049</name>
</gene>
<name>GRA16_GIBZE</name>
<dbReference type="EC" id="2.6.1.-" evidence="5"/>
<dbReference type="EMBL" id="HG970332">
    <property type="protein sequence ID" value="CEF71878.1"/>
    <property type="molecule type" value="Genomic_DNA"/>
</dbReference>
<dbReference type="RefSeq" id="XP_011315638.1">
    <property type="nucleotide sequence ID" value="XM_011317336.1"/>
</dbReference>
<dbReference type="SMR" id="I1R9B6"/>
<dbReference type="STRING" id="229533.I1R9B6"/>
<dbReference type="GeneID" id="23547565"/>
<dbReference type="KEGG" id="fgr:FGSG_00049"/>
<dbReference type="VEuPathDB" id="FungiDB:FGRAMPH1_01G00157"/>
<dbReference type="eggNOG" id="KOG0975">
    <property type="taxonomic scope" value="Eukaryota"/>
</dbReference>
<dbReference type="HOGENOM" id="CLU_031922_1_0_1"/>
<dbReference type="InParanoid" id="I1R9B6"/>
<dbReference type="OrthoDB" id="24300at110618"/>
<dbReference type="Proteomes" id="UP000070720">
    <property type="component" value="Chromosome 1"/>
</dbReference>
<dbReference type="GO" id="GO:0004084">
    <property type="term" value="F:branched-chain-amino-acid transaminase activity"/>
    <property type="evidence" value="ECO:0007669"/>
    <property type="project" value="InterPro"/>
</dbReference>
<dbReference type="GO" id="GO:0009081">
    <property type="term" value="P:branched-chain amino acid metabolic process"/>
    <property type="evidence" value="ECO:0007669"/>
    <property type="project" value="InterPro"/>
</dbReference>
<dbReference type="Gene3D" id="3.30.470.10">
    <property type="match status" value="1"/>
</dbReference>
<dbReference type="Gene3D" id="3.20.10.10">
    <property type="entry name" value="D-amino Acid Aminotransferase, subunit A, domain 2"/>
    <property type="match status" value="1"/>
</dbReference>
<dbReference type="InterPro" id="IPR001544">
    <property type="entry name" value="Aminotrans_IV"/>
</dbReference>
<dbReference type="InterPro" id="IPR036038">
    <property type="entry name" value="Aminotransferase-like"/>
</dbReference>
<dbReference type="InterPro" id="IPR005786">
    <property type="entry name" value="B_amino_transII"/>
</dbReference>
<dbReference type="InterPro" id="IPR043132">
    <property type="entry name" value="BCAT-like_C"/>
</dbReference>
<dbReference type="InterPro" id="IPR043131">
    <property type="entry name" value="BCAT-like_N"/>
</dbReference>
<dbReference type="PANTHER" id="PTHR42825">
    <property type="entry name" value="AMINO ACID AMINOTRANSFERASE"/>
    <property type="match status" value="1"/>
</dbReference>
<dbReference type="PANTHER" id="PTHR42825:SF2">
    <property type="entry name" value="BRANCHED-CHAIN-AMINO-ACID AMINOTRANSFERASE 3, CHLOROPLASTIC-RELATED"/>
    <property type="match status" value="1"/>
</dbReference>
<dbReference type="Pfam" id="PF01063">
    <property type="entry name" value="Aminotran_4"/>
    <property type="match status" value="1"/>
</dbReference>
<dbReference type="PIRSF" id="PIRSF006468">
    <property type="entry name" value="BCAT1"/>
    <property type="match status" value="1"/>
</dbReference>
<dbReference type="SUPFAM" id="SSF56752">
    <property type="entry name" value="D-aminoacid aminotransferase-like PLP-dependent enzymes"/>
    <property type="match status" value="1"/>
</dbReference>
<protein>
    <recommendedName>
        <fullName evidence="3">Aminotransferase FGSG_00049</fullName>
        <ecNumber evidence="5">2.6.1.-</ecNumber>
    </recommendedName>
    <alternativeName>
        <fullName evidence="3">Gramillins biosynthesis cluster protein FGSG_00049</fullName>
    </alternativeName>
</protein>
<sequence length="382" mass="41801">MVKILPPTASIDWDQISIATNLGLGHVESTYHMSTGRWSDPVFVNDPYLRVHGLAPGLQYAFRTPKGRVSIFRPDKHAKRMSHSTSTISIPNIPESLFLASVELAVTSNSSYVPPHTSRAMLYIRPFAFGSSEMIGLVPPSEYKFCVYVKPVPAYHGLSAQDALILTGFDRAAPHGLGHAKVGGNYAPVIKWSEQAKADGFGMTLHLDSKTRTEIDEFSTSGFLGIKVSDEGAVKVVAPSSPCIIDSTTSDCCLQLARHYGWNVEKRPIKYTELPEFSEVVAVGTAASVVSIRSITLEDSRETVRYLDATTNQGRYARKLSTSLDDIMHCRVEDVFGWCHQVGEAPVEDVPTRKMGSSNKKPAFVDIMTLSCAGQGARFSCH</sequence>
<keyword id="KW-0032">Aminotransferase</keyword>
<keyword id="KW-0663">Pyridoxal phosphate</keyword>
<keyword id="KW-1185">Reference proteome</keyword>
<keyword id="KW-0808">Transferase</keyword>
<keyword id="KW-0843">Virulence</keyword>
<proteinExistence type="inferred from homology"/>